<feature type="chain" id="PRO_0000442091" description="O-fucosyltransferase 29">
    <location>
        <begin position="1"/>
        <end position="549"/>
    </location>
</feature>
<feature type="transmembrane region" description="Helical; Signal-anchor for type II membrane protein" evidence="5">
    <location>
        <begin position="43"/>
        <end position="63"/>
    </location>
</feature>
<feature type="region of interest" description="Disordered" evidence="4">
    <location>
        <begin position="506"/>
        <end position="549"/>
    </location>
</feature>
<feature type="compositionally biased region" description="Basic and acidic residues" evidence="4">
    <location>
        <begin position="540"/>
        <end position="549"/>
    </location>
</feature>
<feature type="binding site" evidence="1">
    <location>
        <begin position="292"/>
        <end position="294"/>
    </location>
    <ligand>
        <name>substrate</name>
    </ligand>
</feature>
<feature type="glycosylation site" description="N-linked (GlcNAc...) asparagine" evidence="3">
    <location>
        <position position="152"/>
    </location>
</feature>
<feature type="glycosylation site" description="N-linked (GlcNAc...) asparagine" evidence="3">
    <location>
        <position position="359"/>
    </location>
</feature>
<feature type="glycosylation site" description="N-linked (GlcNAc...) asparagine" evidence="3">
    <location>
        <position position="527"/>
    </location>
</feature>
<dbReference type="EC" id="2.4.1.-" evidence="5"/>
<dbReference type="EMBL" id="KY906078">
    <property type="protein sequence ID" value="ARJ31442.1"/>
    <property type="molecule type" value="mRNA"/>
</dbReference>
<dbReference type="EMBL" id="Z97341">
    <property type="protein sequence ID" value="CAB10440.1"/>
    <property type="status" value="ALT_SEQ"/>
    <property type="molecule type" value="Genomic_DNA"/>
</dbReference>
<dbReference type="EMBL" id="AL161544">
    <property type="protein sequence ID" value="CAB78707.1"/>
    <property type="status" value="ALT_SEQ"/>
    <property type="molecule type" value="Genomic_DNA"/>
</dbReference>
<dbReference type="EMBL" id="CP002687">
    <property type="protein sequence ID" value="AEE83780.1"/>
    <property type="molecule type" value="Genomic_DNA"/>
</dbReference>
<dbReference type="EMBL" id="CP002687">
    <property type="protein sequence ID" value="ANM66896.1"/>
    <property type="molecule type" value="Genomic_DNA"/>
</dbReference>
<dbReference type="EMBL" id="AY102099">
    <property type="protein sequence ID" value="AAM26669.1"/>
    <property type="molecule type" value="mRNA"/>
</dbReference>
<dbReference type="EMBL" id="BT000626">
    <property type="protein sequence ID" value="AAN18192.1"/>
    <property type="molecule type" value="mRNA"/>
</dbReference>
<dbReference type="EMBL" id="AK175823">
    <property type="protein sequence ID" value="BAD43586.1"/>
    <property type="molecule type" value="mRNA"/>
</dbReference>
<dbReference type="PIR" id="F71433">
    <property type="entry name" value="F71433"/>
</dbReference>
<dbReference type="RefSeq" id="NP_001319965.1">
    <property type="nucleotide sequence ID" value="NM_001341122.1"/>
</dbReference>
<dbReference type="RefSeq" id="NP_567509.2">
    <property type="nucleotide sequence ID" value="NM_117766.5"/>
</dbReference>
<dbReference type="FunCoup" id="Q8LPF8">
    <property type="interactions" value="2570"/>
</dbReference>
<dbReference type="STRING" id="3702.Q8LPF8"/>
<dbReference type="GlyCosmos" id="Q8LPF8">
    <property type="glycosylation" value="3 sites, No reported glycans"/>
</dbReference>
<dbReference type="GlyGen" id="Q8LPF8">
    <property type="glycosylation" value="3 sites"/>
</dbReference>
<dbReference type="iPTMnet" id="Q8LPF8"/>
<dbReference type="SwissPalm" id="Q8LPF8"/>
<dbReference type="PaxDb" id="3702-AT4G16650.1"/>
<dbReference type="ProteomicsDB" id="250797"/>
<dbReference type="EnsemblPlants" id="AT4G16650.1">
    <property type="protein sequence ID" value="AT4G16650.1"/>
    <property type="gene ID" value="AT4G16650"/>
</dbReference>
<dbReference type="EnsemblPlants" id="AT4G16650.2">
    <property type="protein sequence ID" value="AT4G16650.2"/>
    <property type="gene ID" value="AT4G16650"/>
</dbReference>
<dbReference type="GeneID" id="827366"/>
<dbReference type="Gramene" id="AT4G16650.1">
    <property type="protein sequence ID" value="AT4G16650.1"/>
    <property type="gene ID" value="AT4G16650"/>
</dbReference>
<dbReference type="Gramene" id="AT4G16650.2">
    <property type="protein sequence ID" value="AT4G16650.2"/>
    <property type="gene ID" value="AT4G16650"/>
</dbReference>
<dbReference type="KEGG" id="ath:AT4G16650"/>
<dbReference type="Araport" id="AT4G16650"/>
<dbReference type="TAIR" id="AT4G16650"/>
<dbReference type="eggNOG" id="ENOG502R410">
    <property type="taxonomic scope" value="Eukaryota"/>
</dbReference>
<dbReference type="HOGENOM" id="CLU_018420_6_1_1"/>
<dbReference type="InParanoid" id="Q8LPF8"/>
<dbReference type="OMA" id="WRFSVIS"/>
<dbReference type="OrthoDB" id="1882547at2759"/>
<dbReference type="PhylomeDB" id="Q8LPF8"/>
<dbReference type="PRO" id="PR:Q8LPF8"/>
<dbReference type="Proteomes" id="UP000006548">
    <property type="component" value="Chromosome 4"/>
</dbReference>
<dbReference type="ExpressionAtlas" id="Q8LPF8">
    <property type="expression patterns" value="baseline and differential"/>
</dbReference>
<dbReference type="GO" id="GO:0005768">
    <property type="term" value="C:endosome"/>
    <property type="evidence" value="ECO:0007005"/>
    <property type="project" value="TAIR"/>
</dbReference>
<dbReference type="GO" id="GO:0005794">
    <property type="term" value="C:Golgi apparatus"/>
    <property type="evidence" value="ECO:0007005"/>
    <property type="project" value="TAIR"/>
</dbReference>
<dbReference type="GO" id="GO:0016020">
    <property type="term" value="C:membrane"/>
    <property type="evidence" value="ECO:0007669"/>
    <property type="project" value="UniProtKB-SubCell"/>
</dbReference>
<dbReference type="GO" id="GO:0005802">
    <property type="term" value="C:trans-Golgi network"/>
    <property type="evidence" value="ECO:0007005"/>
    <property type="project" value="TAIR"/>
</dbReference>
<dbReference type="GO" id="GO:0016757">
    <property type="term" value="F:glycosyltransferase activity"/>
    <property type="evidence" value="ECO:0007669"/>
    <property type="project" value="UniProtKB-KW"/>
</dbReference>
<dbReference type="GO" id="GO:0006004">
    <property type="term" value="P:fucose metabolic process"/>
    <property type="evidence" value="ECO:0007669"/>
    <property type="project" value="UniProtKB-KW"/>
</dbReference>
<dbReference type="CDD" id="cd11299">
    <property type="entry name" value="O-FucT_plant"/>
    <property type="match status" value="1"/>
</dbReference>
<dbReference type="InterPro" id="IPR024709">
    <property type="entry name" value="FucosylTrfase_pln"/>
</dbReference>
<dbReference type="InterPro" id="IPR019378">
    <property type="entry name" value="GDP-Fuc_O-FucTrfase"/>
</dbReference>
<dbReference type="PANTHER" id="PTHR31818">
    <property type="entry name" value="O-FUCOSYLTRANSFERASE 16"/>
    <property type="match status" value="1"/>
</dbReference>
<dbReference type="PANTHER" id="PTHR31818:SF3">
    <property type="entry name" value="O-FUCOSYLTRANSFERASE 29"/>
    <property type="match status" value="1"/>
</dbReference>
<dbReference type="Pfam" id="PF10250">
    <property type="entry name" value="O-FucT"/>
    <property type="match status" value="1"/>
</dbReference>
<dbReference type="PIRSF" id="PIRSF009360">
    <property type="entry name" value="UCP009360"/>
    <property type="match status" value="1"/>
</dbReference>
<accession>Q8LPF8</accession>
<accession>O23508</accession>
<name>OFT29_ARATH</name>
<reference key="1">
    <citation type="submission" date="2017-04" db="EMBL/GenBank/DDBJ databases">
        <title>Arabidopsis glycosyltransferases: an update.</title>
        <authorList>
            <person name="Zeng W."/>
            <person name="Gluza P."/>
            <person name="Heazlewood J."/>
        </authorList>
    </citation>
    <scope>NUCLEOTIDE SEQUENCE [MRNA]</scope>
    <source>
        <strain>cv. Columbia</strain>
    </source>
</reference>
<reference key="2">
    <citation type="journal article" date="1998" name="Nature">
        <title>Analysis of 1.9 Mb of contiguous sequence from chromosome 4 of Arabidopsis thaliana.</title>
        <authorList>
            <person name="Bevan M."/>
            <person name="Bancroft I."/>
            <person name="Bent E."/>
            <person name="Love K."/>
            <person name="Goodman H.M."/>
            <person name="Dean C."/>
            <person name="Bergkamp R."/>
            <person name="Dirkse W."/>
            <person name="van Staveren M."/>
            <person name="Stiekema W."/>
            <person name="Drost L."/>
            <person name="Ridley P."/>
            <person name="Hudson S.-A."/>
            <person name="Patel K."/>
            <person name="Murphy G."/>
            <person name="Piffanelli P."/>
            <person name="Wedler H."/>
            <person name="Wedler E."/>
            <person name="Wambutt R."/>
            <person name="Weitzenegger T."/>
            <person name="Pohl T."/>
            <person name="Terryn N."/>
            <person name="Gielen J."/>
            <person name="Villarroel R."/>
            <person name="De Clercq R."/>
            <person name="van Montagu M."/>
            <person name="Lecharny A."/>
            <person name="Aubourg S."/>
            <person name="Gy I."/>
            <person name="Kreis M."/>
            <person name="Lao N."/>
            <person name="Kavanagh T."/>
            <person name="Hempel S."/>
            <person name="Kotter P."/>
            <person name="Entian K.-D."/>
            <person name="Rieger M."/>
            <person name="Schaefer M."/>
            <person name="Funk B."/>
            <person name="Mueller-Auer S."/>
            <person name="Silvey M."/>
            <person name="James R."/>
            <person name="Monfort A."/>
            <person name="Pons A."/>
            <person name="Puigdomenech P."/>
            <person name="Douka A."/>
            <person name="Voukelatou E."/>
            <person name="Milioni D."/>
            <person name="Hatzopoulos P."/>
            <person name="Piravandi E."/>
            <person name="Obermaier B."/>
            <person name="Hilbert H."/>
            <person name="Duesterhoeft A."/>
            <person name="Moores T."/>
            <person name="Jones J.D.G."/>
            <person name="Eneva T."/>
            <person name="Palme K."/>
            <person name="Benes V."/>
            <person name="Rechmann S."/>
            <person name="Ansorge W."/>
            <person name="Cooke R."/>
            <person name="Berger C."/>
            <person name="Delseny M."/>
            <person name="Voet M."/>
            <person name="Volckaert G."/>
            <person name="Mewes H.-W."/>
            <person name="Klosterman S."/>
            <person name="Schueller C."/>
            <person name="Chalwatzis N."/>
        </authorList>
    </citation>
    <scope>NUCLEOTIDE SEQUENCE [LARGE SCALE GENOMIC DNA]</scope>
    <source>
        <strain>cv. Columbia</strain>
    </source>
</reference>
<reference key="3">
    <citation type="journal article" date="1999" name="Nature">
        <title>Sequence and analysis of chromosome 4 of the plant Arabidopsis thaliana.</title>
        <authorList>
            <person name="Mayer K.F.X."/>
            <person name="Schueller C."/>
            <person name="Wambutt R."/>
            <person name="Murphy G."/>
            <person name="Volckaert G."/>
            <person name="Pohl T."/>
            <person name="Duesterhoeft A."/>
            <person name="Stiekema W."/>
            <person name="Entian K.-D."/>
            <person name="Terryn N."/>
            <person name="Harris B."/>
            <person name="Ansorge W."/>
            <person name="Brandt P."/>
            <person name="Grivell L.A."/>
            <person name="Rieger M."/>
            <person name="Weichselgartner M."/>
            <person name="de Simone V."/>
            <person name="Obermaier B."/>
            <person name="Mache R."/>
            <person name="Mueller M."/>
            <person name="Kreis M."/>
            <person name="Delseny M."/>
            <person name="Puigdomenech P."/>
            <person name="Watson M."/>
            <person name="Schmidtheini T."/>
            <person name="Reichert B."/>
            <person name="Portetelle D."/>
            <person name="Perez-Alonso M."/>
            <person name="Boutry M."/>
            <person name="Bancroft I."/>
            <person name="Vos P."/>
            <person name="Hoheisel J."/>
            <person name="Zimmermann W."/>
            <person name="Wedler H."/>
            <person name="Ridley P."/>
            <person name="Langham S.-A."/>
            <person name="McCullagh B."/>
            <person name="Bilham L."/>
            <person name="Robben J."/>
            <person name="van der Schueren J."/>
            <person name="Grymonprez B."/>
            <person name="Chuang Y.-J."/>
            <person name="Vandenbussche F."/>
            <person name="Braeken M."/>
            <person name="Weltjens I."/>
            <person name="Voet M."/>
            <person name="Bastiaens I."/>
            <person name="Aert R."/>
            <person name="Defoor E."/>
            <person name="Weitzenegger T."/>
            <person name="Bothe G."/>
            <person name="Ramsperger U."/>
            <person name="Hilbert H."/>
            <person name="Braun M."/>
            <person name="Holzer E."/>
            <person name="Brandt A."/>
            <person name="Peters S."/>
            <person name="van Staveren M."/>
            <person name="Dirkse W."/>
            <person name="Mooijman P."/>
            <person name="Klein Lankhorst R."/>
            <person name="Rose M."/>
            <person name="Hauf J."/>
            <person name="Koetter P."/>
            <person name="Berneiser S."/>
            <person name="Hempel S."/>
            <person name="Feldpausch M."/>
            <person name="Lamberth S."/>
            <person name="Van den Daele H."/>
            <person name="De Keyser A."/>
            <person name="Buysshaert C."/>
            <person name="Gielen J."/>
            <person name="Villarroel R."/>
            <person name="De Clercq R."/>
            <person name="van Montagu M."/>
            <person name="Rogers J."/>
            <person name="Cronin A."/>
            <person name="Quail M.A."/>
            <person name="Bray-Allen S."/>
            <person name="Clark L."/>
            <person name="Doggett J."/>
            <person name="Hall S."/>
            <person name="Kay M."/>
            <person name="Lennard N."/>
            <person name="McLay K."/>
            <person name="Mayes R."/>
            <person name="Pettett A."/>
            <person name="Rajandream M.A."/>
            <person name="Lyne M."/>
            <person name="Benes V."/>
            <person name="Rechmann S."/>
            <person name="Borkova D."/>
            <person name="Bloecker H."/>
            <person name="Scharfe M."/>
            <person name="Grimm M."/>
            <person name="Loehnert T.-H."/>
            <person name="Dose S."/>
            <person name="de Haan M."/>
            <person name="Maarse A.C."/>
            <person name="Schaefer M."/>
            <person name="Mueller-Auer S."/>
            <person name="Gabel C."/>
            <person name="Fuchs M."/>
            <person name="Fartmann B."/>
            <person name="Granderath K."/>
            <person name="Dauner D."/>
            <person name="Herzl A."/>
            <person name="Neumann S."/>
            <person name="Argiriou A."/>
            <person name="Vitale D."/>
            <person name="Liguori R."/>
            <person name="Piravandi E."/>
            <person name="Massenet O."/>
            <person name="Quigley F."/>
            <person name="Clabauld G."/>
            <person name="Muendlein A."/>
            <person name="Felber R."/>
            <person name="Schnabl S."/>
            <person name="Hiller R."/>
            <person name="Schmidt W."/>
            <person name="Lecharny A."/>
            <person name="Aubourg S."/>
            <person name="Chefdor F."/>
            <person name="Cooke R."/>
            <person name="Berger C."/>
            <person name="Monfort A."/>
            <person name="Casacuberta E."/>
            <person name="Gibbons T."/>
            <person name="Weber N."/>
            <person name="Vandenbol M."/>
            <person name="Bargues M."/>
            <person name="Terol J."/>
            <person name="Torres A."/>
            <person name="Perez-Perez A."/>
            <person name="Purnelle B."/>
            <person name="Bent E."/>
            <person name="Johnson S."/>
            <person name="Tacon D."/>
            <person name="Jesse T."/>
            <person name="Heijnen L."/>
            <person name="Schwarz S."/>
            <person name="Scholler P."/>
            <person name="Heber S."/>
            <person name="Francs P."/>
            <person name="Bielke C."/>
            <person name="Frishman D."/>
            <person name="Haase D."/>
            <person name="Lemcke K."/>
            <person name="Mewes H.-W."/>
            <person name="Stocker S."/>
            <person name="Zaccaria P."/>
            <person name="Bevan M."/>
            <person name="Wilson R.K."/>
            <person name="de la Bastide M."/>
            <person name="Habermann K."/>
            <person name="Parnell L."/>
            <person name="Dedhia N."/>
            <person name="Gnoj L."/>
            <person name="Schutz K."/>
            <person name="Huang E."/>
            <person name="Spiegel L."/>
            <person name="Sekhon M."/>
            <person name="Murray J."/>
            <person name="Sheet P."/>
            <person name="Cordes M."/>
            <person name="Abu-Threideh J."/>
            <person name="Stoneking T."/>
            <person name="Kalicki J."/>
            <person name="Graves T."/>
            <person name="Harmon G."/>
            <person name="Edwards J."/>
            <person name="Latreille P."/>
            <person name="Courtney L."/>
            <person name="Cloud J."/>
            <person name="Abbott A."/>
            <person name="Scott K."/>
            <person name="Johnson D."/>
            <person name="Minx P."/>
            <person name="Bentley D."/>
            <person name="Fulton B."/>
            <person name="Miller N."/>
            <person name="Greco T."/>
            <person name="Kemp K."/>
            <person name="Kramer J."/>
            <person name="Fulton L."/>
            <person name="Mardis E."/>
            <person name="Dante M."/>
            <person name="Pepin K."/>
            <person name="Hillier L.W."/>
            <person name="Nelson J."/>
            <person name="Spieth J."/>
            <person name="Ryan E."/>
            <person name="Andrews S."/>
            <person name="Geisel C."/>
            <person name="Layman D."/>
            <person name="Du H."/>
            <person name="Ali J."/>
            <person name="Berghoff A."/>
            <person name="Jones K."/>
            <person name="Drone K."/>
            <person name="Cotton M."/>
            <person name="Joshu C."/>
            <person name="Antonoiu B."/>
            <person name="Zidanic M."/>
            <person name="Strong C."/>
            <person name="Sun H."/>
            <person name="Lamar B."/>
            <person name="Yordan C."/>
            <person name="Ma P."/>
            <person name="Zhong J."/>
            <person name="Preston R."/>
            <person name="Vil D."/>
            <person name="Shekher M."/>
            <person name="Matero A."/>
            <person name="Shah R."/>
            <person name="Swaby I.K."/>
            <person name="O'Shaughnessy A."/>
            <person name="Rodriguez M."/>
            <person name="Hoffman J."/>
            <person name="Till S."/>
            <person name="Granat S."/>
            <person name="Shohdy N."/>
            <person name="Hasegawa A."/>
            <person name="Hameed A."/>
            <person name="Lodhi M."/>
            <person name="Johnson A."/>
            <person name="Chen E."/>
            <person name="Marra M.A."/>
            <person name="Martienssen R."/>
            <person name="McCombie W.R."/>
        </authorList>
    </citation>
    <scope>NUCLEOTIDE SEQUENCE [LARGE SCALE GENOMIC DNA]</scope>
    <source>
        <strain>cv. Columbia</strain>
    </source>
</reference>
<reference key="4">
    <citation type="journal article" date="2017" name="Plant J.">
        <title>Araport11: a complete reannotation of the Arabidopsis thaliana reference genome.</title>
        <authorList>
            <person name="Cheng C.Y."/>
            <person name="Krishnakumar V."/>
            <person name="Chan A.P."/>
            <person name="Thibaud-Nissen F."/>
            <person name="Schobel S."/>
            <person name="Town C.D."/>
        </authorList>
    </citation>
    <scope>GENOME REANNOTATION</scope>
    <source>
        <strain>cv. Columbia</strain>
    </source>
</reference>
<reference key="5">
    <citation type="journal article" date="2003" name="Science">
        <title>Empirical analysis of transcriptional activity in the Arabidopsis genome.</title>
        <authorList>
            <person name="Yamada K."/>
            <person name="Lim J."/>
            <person name="Dale J.M."/>
            <person name="Chen H."/>
            <person name="Shinn P."/>
            <person name="Palm C.J."/>
            <person name="Southwick A.M."/>
            <person name="Wu H.C."/>
            <person name="Kim C.J."/>
            <person name="Nguyen M."/>
            <person name="Pham P.K."/>
            <person name="Cheuk R.F."/>
            <person name="Karlin-Newmann G."/>
            <person name="Liu S.X."/>
            <person name="Lam B."/>
            <person name="Sakano H."/>
            <person name="Wu T."/>
            <person name="Yu G."/>
            <person name="Miranda M."/>
            <person name="Quach H.L."/>
            <person name="Tripp M."/>
            <person name="Chang C.H."/>
            <person name="Lee J.M."/>
            <person name="Toriumi M.J."/>
            <person name="Chan M.M."/>
            <person name="Tang C.C."/>
            <person name="Onodera C.S."/>
            <person name="Deng J.M."/>
            <person name="Akiyama K."/>
            <person name="Ansari Y."/>
            <person name="Arakawa T."/>
            <person name="Banh J."/>
            <person name="Banno F."/>
            <person name="Bowser L."/>
            <person name="Brooks S.Y."/>
            <person name="Carninci P."/>
            <person name="Chao Q."/>
            <person name="Choy N."/>
            <person name="Enju A."/>
            <person name="Goldsmith A.D."/>
            <person name="Gurjal M."/>
            <person name="Hansen N.F."/>
            <person name="Hayashizaki Y."/>
            <person name="Johnson-Hopson C."/>
            <person name="Hsuan V.W."/>
            <person name="Iida K."/>
            <person name="Karnes M."/>
            <person name="Khan S."/>
            <person name="Koesema E."/>
            <person name="Ishida J."/>
            <person name="Jiang P.X."/>
            <person name="Jones T."/>
            <person name="Kawai J."/>
            <person name="Kamiya A."/>
            <person name="Meyers C."/>
            <person name="Nakajima M."/>
            <person name="Narusaka M."/>
            <person name="Seki M."/>
            <person name="Sakurai T."/>
            <person name="Satou M."/>
            <person name="Tamse R."/>
            <person name="Vaysberg M."/>
            <person name="Wallender E.K."/>
            <person name="Wong C."/>
            <person name="Yamamura Y."/>
            <person name="Yuan S."/>
            <person name="Shinozaki K."/>
            <person name="Davis R.W."/>
            <person name="Theologis A."/>
            <person name="Ecker J.R."/>
        </authorList>
    </citation>
    <scope>NUCLEOTIDE SEQUENCE [LARGE SCALE MRNA]</scope>
    <source>
        <strain>cv. Columbia</strain>
    </source>
</reference>
<reference key="6">
    <citation type="submission" date="2004-09" db="EMBL/GenBank/DDBJ databases">
        <title>Large-scale analysis of RIKEN Arabidopsis full-length (RAFL) cDNAs.</title>
        <authorList>
            <person name="Totoki Y."/>
            <person name="Seki M."/>
            <person name="Ishida J."/>
            <person name="Nakajima M."/>
            <person name="Enju A."/>
            <person name="Kamiya A."/>
            <person name="Narusaka M."/>
            <person name="Shin-i T."/>
            <person name="Nakagawa M."/>
            <person name="Sakamoto N."/>
            <person name="Oishi K."/>
            <person name="Kohara Y."/>
            <person name="Kobayashi M."/>
            <person name="Toyoda A."/>
            <person name="Sakaki Y."/>
            <person name="Sakurai T."/>
            <person name="Iida K."/>
            <person name="Akiyama K."/>
            <person name="Satou M."/>
            <person name="Toyoda T."/>
            <person name="Konagaya A."/>
            <person name="Carninci P."/>
            <person name="Kawai J."/>
            <person name="Hayashizaki Y."/>
            <person name="Shinozaki K."/>
        </authorList>
    </citation>
    <scope>NUCLEOTIDE SEQUENCE [LARGE SCALE MRNA]</scope>
    <source>
        <strain>cv. Columbia</strain>
    </source>
</reference>
<reference key="7">
    <citation type="journal article" date="2012" name="Front. Plant Sci.">
        <title>Plant glycosyltransferases beyond CAZy: a perspective on DUF families.</title>
        <authorList>
            <person name="Hansen S.F."/>
            <person name="Harholt J."/>
            <person name="Oikawa A."/>
            <person name="Scheller H.V."/>
        </authorList>
    </citation>
    <scope>GENE FAMILY</scope>
    <scope>REVIEW</scope>
</reference>
<reference key="8">
    <citation type="journal article" date="2012" name="PLoS ONE">
        <title>The FRIABLE1 gene product affects cell adhesion in Arabidopsis.</title>
        <authorList>
            <person name="Neumetzler L."/>
            <person name="Humphrey T."/>
            <person name="Lumba S."/>
            <person name="Snyder S."/>
            <person name="Yeats T.H."/>
            <person name="Usadel B."/>
            <person name="Vasilevski A."/>
            <person name="Patel J."/>
            <person name="Rose J.K."/>
            <person name="Persson S."/>
            <person name="Bonetta D."/>
        </authorList>
    </citation>
    <scope>GENE FAMILY</scope>
</reference>
<reference key="9">
    <citation type="journal article" date="2012" name="PLoS ONE">
        <title>Identification of putative rhamnogalacturonan-II specific glycosyltransferases in Arabidopsis using a combination of bioinformatics approaches.</title>
        <authorList>
            <person name="Voxeur A."/>
            <person name="Andre A."/>
            <person name="Breton C."/>
            <person name="Lerouge P."/>
        </authorList>
    </citation>
    <scope>GENE FAMILY</scope>
</reference>
<reference key="10">
    <citation type="journal article" date="2013" name="Plant J.">
        <title>Identification of an additional protein involved in mannan biosynthesis.</title>
        <authorList>
            <person name="Wang Y."/>
            <person name="Mortimer J.C."/>
            <person name="Davis J."/>
            <person name="Dupree P."/>
            <person name="Keegstra K."/>
        </authorList>
    </citation>
    <scope>GENE FAMILY</scope>
</reference>
<reference key="11">
    <citation type="journal article" date="2014" name="Plant J.">
        <title>The plant glycosyltransferase clone collection for functional genomics.</title>
        <authorList>
            <person name="Lao J."/>
            <person name="Oikawa A."/>
            <person name="Bromley J.R."/>
            <person name="McInerney P."/>
            <person name="Suttangkakul A."/>
            <person name="Smith-Moritz A.M."/>
            <person name="Plahar H."/>
            <person name="Chiu T.-Y."/>
            <person name="Gonzalez Fernandez-Nino S.M.G."/>
            <person name="Ebert B."/>
            <person name="Yang F."/>
            <person name="Christiansen K.M."/>
            <person name="Hansen S.F."/>
            <person name="Stonebloom S."/>
            <person name="Adams P.D."/>
            <person name="Ronald P.C."/>
            <person name="Hillson N.J."/>
            <person name="Hadi M.Z."/>
            <person name="Vega-Sanchez M.E."/>
            <person name="Loque D."/>
            <person name="Scheller H.V."/>
            <person name="Heazlewood J.L."/>
        </authorList>
    </citation>
    <scope>WEB RESOURCE</scope>
</reference>
<comment type="pathway">
    <text evidence="5">Glycan metabolism.</text>
</comment>
<comment type="subcellular location">
    <subcellularLocation>
        <location evidence="2">Membrane</location>
        <topology evidence="5">Single-pass type II membrane protein</topology>
    </subcellularLocation>
</comment>
<comment type="similarity">
    <text evidence="5">Belongs to the glycosyltransferase GT106 family.</text>
</comment>
<comment type="sequence caution" evidence="5">
    <conflict type="erroneous gene model prediction">
        <sequence resource="EMBL-CDS" id="CAB10440"/>
    </conflict>
</comment>
<comment type="sequence caution" evidence="5">
    <conflict type="erroneous gene model prediction">
        <sequence resource="EMBL-CDS" id="CAB78707"/>
    </conflict>
</comment>
<gene>
    <name evidence="5" type="primary">OFUT29</name>
    <name evidence="6" type="ordered locus">At4g16650</name>
    <name evidence="8" type="ORF">dl4350w</name>
    <name evidence="9" type="ORF">FCAALL.427</name>
</gene>
<sequence length="549" mass="63535">MGVVAEVWRSSVRLLTNSPQLNGGSHKSALWKWRFFSAQPKRTVMWTWVCGFMLFSLGVISLFTGHVVSHLEWYSQQLSKRSLLDMSRREPIDVWKSKYSKFFYGCSERGRNFLPAVQEQSSNGYLLIAASGGLNQQRTGITDAVVVARILNATLVVPELDHHSYWKDDSDFSDIFDVNWFISSLAKDVTIVKRVPDRVMRAMEKPPYTTRVPRKSTLEYYLDQVLPILTRRHVLQLTKFDYRLANDLDEDMQKLRCRVNYHALRFTKRIQSVGMKVVKRMRKMAKRFIAVHLRFEPDMLAFSGCDFGGGEKERAELAEIRKRWDTLPDLDPLEERKRGKCPLTPHEVGLMLRALGFTNDTYIYVASGEIYGGEKTLKPLRELFPNFYTKEMLANDELKPLLPYSSRLAAIDYIVSDESDVFITNNNGNMAKILAGRRRYMGHKRTIRPNAKKLSALFMDREKMEWQTFAKKVKSCQRGFMGDPDEFKPGRGEFHEYPQSCICQRPFSYDKTSTDDEEEDMSEENHNSTSPGHVHLSSADNERDEVFPD</sequence>
<keyword id="KW-0119">Carbohydrate metabolism</keyword>
<keyword id="KW-0294">Fucose metabolism</keyword>
<keyword id="KW-0325">Glycoprotein</keyword>
<keyword id="KW-0328">Glycosyltransferase</keyword>
<keyword id="KW-0472">Membrane</keyword>
<keyword id="KW-1185">Reference proteome</keyword>
<keyword id="KW-0735">Signal-anchor</keyword>
<keyword id="KW-0808">Transferase</keyword>
<keyword id="KW-0812">Transmembrane</keyword>
<keyword id="KW-1133">Transmembrane helix</keyword>
<protein>
    <recommendedName>
        <fullName evidence="5">O-fucosyltransferase 29</fullName>
        <shortName evidence="5">O-FucT-29</shortName>
        <ecNumber evidence="5">2.4.1.-</ecNumber>
    </recommendedName>
    <alternativeName>
        <fullName evidence="7">O-fucosyltransferase family protein</fullName>
    </alternativeName>
</protein>
<proteinExistence type="evidence at transcript level"/>
<organism>
    <name type="scientific">Arabidopsis thaliana</name>
    <name type="common">Mouse-ear cress</name>
    <dbReference type="NCBI Taxonomy" id="3702"/>
    <lineage>
        <taxon>Eukaryota</taxon>
        <taxon>Viridiplantae</taxon>
        <taxon>Streptophyta</taxon>
        <taxon>Embryophyta</taxon>
        <taxon>Tracheophyta</taxon>
        <taxon>Spermatophyta</taxon>
        <taxon>Magnoliopsida</taxon>
        <taxon>eudicotyledons</taxon>
        <taxon>Gunneridae</taxon>
        <taxon>Pentapetalae</taxon>
        <taxon>rosids</taxon>
        <taxon>malvids</taxon>
        <taxon>Brassicales</taxon>
        <taxon>Brassicaceae</taxon>
        <taxon>Camelineae</taxon>
        <taxon>Arabidopsis</taxon>
    </lineage>
</organism>
<evidence type="ECO:0000250" key="1">
    <source>
        <dbReference type="UniProtKB" id="Q9H488"/>
    </source>
</evidence>
<evidence type="ECO:0000255" key="2"/>
<evidence type="ECO:0000255" key="3">
    <source>
        <dbReference type="PROSITE-ProRule" id="PRU00498"/>
    </source>
</evidence>
<evidence type="ECO:0000256" key="4">
    <source>
        <dbReference type="SAM" id="MobiDB-lite"/>
    </source>
</evidence>
<evidence type="ECO:0000305" key="5"/>
<evidence type="ECO:0000312" key="6">
    <source>
        <dbReference type="Araport" id="AT4G16650"/>
    </source>
</evidence>
<evidence type="ECO:0000312" key="7">
    <source>
        <dbReference type="EMBL" id="ARJ31442.1"/>
    </source>
</evidence>
<evidence type="ECO:0000312" key="8">
    <source>
        <dbReference type="EMBL" id="CAB10440.1"/>
    </source>
</evidence>
<evidence type="ECO:0000312" key="9">
    <source>
        <dbReference type="EMBL" id="CAB78707.1"/>
    </source>
</evidence>